<dbReference type="EMBL" id="CP000140">
    <property type="protein sequence ID" value="ABR45079.1"/>
    <property type="molecule type" value="Genomic_DNA"/>
</dbReference>
<dbReference type="RefSeq" id="WP_005859749.1">
    <property type="nucleotide sequence ID" value="NZ_LR215978.1"/>
</dbReference>
<dbReference type="SMR" id="A6LHB5"/>
<dbReference type="STRING" id="435591.BDI_3376"/>
<dbReference type="PaxDb" id="435591-BDI_3376"/>
<dbReference type="KEGG" id="pdi:BDI_3376"/>
<dbReference type="eggNOG" id="COG0233">
    <property type="taxonomic scope" value="Bacteria"/>
</dbReference>
<dbReference type="HOGENOM" id="CLU_073981_2_0_10"/>
<dbReference type="BioCyc" id="PDIS435591:G1G5A-3466-MONOMER"/>
<dbReference type="Proteomes" id="UP000000566">
    <property type="component" value="Chromosome"/>
</dbReference>
<dbReference type="GO" id="GO:0005737">
    <property type="term" value="C:cytoplasm"/>
    <property type="evidence" value="ECO:0007669"/>
    <property type="project" value="UniProtKB-SubCell"/>
</dbReference>
<dbReference type="GO" id="GO:0043023">
    <property type="term" value="F:ribosomal large subunit binding"/>
    <property type="evidence" value="ECO:0007669"/>
    <property type="project" value="TreeGrafter"/>
</dbReference>
<dbReference type="GO" id="GO:0006415">
    <property type="term" value="P:translational termination"/>
    <property type="evidence" value="ECO:0007669"/>
    <property type="project" value="UniProtKB-UniRule"/>
</dbReference>
<dbReference type="CDD" id="cd00520">
    <property type="entry name" value="RRF"/>
    <property type="match status" value="1"/>
</dbReference>
<dbReference type="FunFam" id="1.10.132.20:FF:000001">
    <property type="entry name" value="Ribosome-recycling factor"/>
    <property type="match status" value="1"/>
</dbReference>
<dbReference type="FunFam" id="3.30.1360.40:FF:000001">
    <property type="entry name" value="Ribosome-recycling factor"/>
    <property type="match status" value="1"/>
</dbReference>
<dbReference type="Gene3D" id="3.30.1360.40">
    <property type="match status" value="1"/>
</dbReference>
<dbReference type="Gene3D" id="1.10.132.20">
    <property type="entry name" value="Ribosome-recycling factor"/>
    <property type="match status" value="1"/>
</dbReference>
<dbReference type="HAMAP" id="MF_00040">
    <property type="entry name" value="RRF"/>
    <property type="match status" value="1"/>
</dbReference>
<dbReference type="InterPro" id="IPR002661">
    <property type="entry name" value="Ribosome_recyc_fac"/>
</dbReference>
<dbReference type="InterPro" id="IPR023584">
    <property type="entry name" value="Ribosome_recyc_fac_dom"/>
</dbReference>
<dbReference type="InterPro" id="IPR036191">
    <property type="entry name" value="RRF_sf"/>
</dbReference>
<dbReference type="NCBIfam" id="TIGR00496">
    <property type="entry name" value="frr"/>
    <property type="match status" value="1"/>
</dbReference>
<dbReference type="PANTHER" id="PTHR20982:SF3">
    <property type="entry name" value="MITOCHONDRIAL RIBOSOME RECYCLING FACTOR PSEUDO 1"/>
    <property type="match status" value="1"/>
</dbReference>
<dbReference type="PANTHER" id="PTHR20982">
    <property type="entry name" value="RIBOSOME RECYCLING FACTOR"/>
    <property type="match status" value="1"/>
</dbReference>
<dbReference type="Pfam" id="PF01765">
    <property type="entry name" value="RRF"/>
    <property type="match status" value="1"/>
</dbReference>
<dbReference type="SUPFAM" id="SSF55194">
    <property type="entry name" value="Ribosome recycling factor, RRF"/>
    <property type="match status" value="1"/>
</dbReference>
<keyword id="KW-0963">Cytoplasm</keyword>
<keyword id="KW-0648">Protein biosynthesis</keyword>
<keyword id="KW-1185">Reference proteome</keyword>
<comment type="function">
    <text evidence="1">Responsible for the release of ribosomes from messenger RNA at the termination of protein biosynthesis. May increase the efficiency of translation by recycling ribosomes from one round of translation to another.</text>
</comment>
<comment type="subcellular location">
    <subcellularLocation>
        <location evidence="1">Cytoplasm</location>
    </subcellularLocation>
</comment>
<comment type="similarity">
    <text evidence="1">Belongs to the RRF family.</text>
</comment>
<organism>
    <name type="scientific">Parabacteroides distasonis (strain ATCC 8503 / DSM 20701 / CIP 104284 / JCM 5825 / NCTC 11152)</name>
    <dbReference type="NCBI Taxonomy" id="435591"/>
    <lineage>
        <taxon>Bacteria</taxon>
        <taxon>Pseudomonadati</taxon>
        <taxon>Bacteroidota</taxon>
        <taxon>Bacteroidia</taxon>
        <taxon>Bacteroidales</taxon>
        <taxon>Tannerellaceae</taxon>
        <taxon>Parabacteroides</taxon>
    </lineage>
</organism>
<sequence length="187" mass="21139">MIDTKQLIKAGEEKMTFAIEYLDEQLSHIRAGKANPKILDCVKVMYYGAPVPLTNVATVTVPDARTIMITPWEKKIIRDIEKGILDSELGITPENNGEVIRLGIPPLTEERRRQLVKQCKQEAENAKISVRNARRDAIEALKKSIKSDGVPEDVEKDAEAEVQKIHDKFIKKIDELYAAKEKEVMTV</sequence>
<evidence type="ECO:0000255" key="1">
    <source>
        <dbReference type="HAMAP-Rule" id="MF_00040"/>
    </source>
</evidence>
<reference key="1">
    <citation type="journal article" date="2007" name="PLoS Biol.">
        <title>Evolution of symbiotic bacteria in the distal human intestine.</title>
        <authorList>
            <person name="Xu J."/>
            <person name="Mahowald M.A."/>
            <person name="Ley R.E."/>
            <person name="Lozupone C.A."/>
            <person name="Hamady M."/>
            <person name="Martens E.C."/>
            <person name="Henrissat B."/>
            <person name="Coutinho P.M."/>
            <person name="Minx P."/>
            <person name="Latreille P."/>
            <person name="Cordum H."/>
            <person name="Van Brunt A."/>
            <person name="Kim K."/>
            <person name="Fulton R.S."/>
            <person name="Fulton L.A."/>
            <person name="Clifton S.W."/>
            <person name="Wilson R.K."/>
            <person name="Knight R.D."/>
            <person name="Gordon J.I."/>
        </authorList>
    </citation>
    <scope>NUCLEOTIDE SEQUENCE [LARGE SCALE GENOMIC DNA]</scope>
    <source>
        <strain>ATCC 8503 / DSM 20701 / CIP 104284 / JCM 5825 / NCTC 11152</strain>
    </source>
</reference>
<accession>A6LHB5</accession>
<protein>
    <recommendedName>
        <fullName evidence="1">Ribosome-recycling factor</fullName>
        <shortName evidence="1">RRF</shortName>
    </recommendedName>
    <alternativeName>
        <fullName evidence="1">Ribosome-releasing factor</fullName>
    </alternativeName>
</protein>
<feature type="chain" id="PRO_0000341027" description="Ribosome-recycling factor">
    <location>
        <begin position="1"/>
        <end position="187"/>
    </location>
</feature>
<name>RRF_PARD8</name>
<gene>
    <name evidence="1" type="primary">frr</name>
    <name type="ordered locus">BDI_3376</name>
</gene>
<proteinExistence type="inferred from homology"/>